<proteinExistence type="inferred from homology"/>
<dbReference type="EC" id="2.4.1.227" evidence="1"/>
<dbReference type="EMBL" id="AP010918">
    <property type="protein sequence ID" value="BAH26448.1"/>
    <property type="molecule type" value="Genomic_DNA"/>
</dbReference>
<dbReference type="RefSeq" id="WP_010950665.1">
    <property type="nucleotide sequence ID" value="NZ_CP014566.1"/>
</dbReference>
<dbReference type="SMR" id="C1AQ69"/>
<dbReference type="CAZy" id="GT28">
    <property type="family name" value="Glycosyltransferase Family 28"/>
</dbReference>
<dbReference type="KEGG" id="mbt:JTY_2164"/>
<dbReference type="HOGENOM" id="CLU_037404_1_0_11"/>
<dbReference type="UniPathway" id="UPA00219"/>
<dbReference type="GO" id="GO:0005886">
    <property type="term" value="C:plasma membrane"/>
    <property type="evidence" value="ECO:0007669"/>
    <property type="project" value="UniProtKB-SubCell"/>
</dbReference>
<dbReference type="GO" id="GO:0051991">
    <property type="term" value="F:UDP-N-acetyl-D-glucosamine:N-acetylmuramoyl-L-alanyl-D-glutamyl-meso-2,6-diaminopimelyl-D-alanyl-D-alanine-diphosphoundecaprenol 4-beta-N-acetylglucosaminlytransferase activity"/>
    <property type="evidence" value="ECO:0007669"/>
    <property type="project" value="RHEA"/>
</dbReference>
<dbReference type="GO" id="GO:0050511">
    <property type="term" value="F:undecaprenyldiphospho-muramoylpentapeptide beta-N-acetylglucosaminyltransferase activity"/>
    <property type="evidence" value="ECO:0007669"/>
    <property type="project" value="UniProtKB-UniRule"/>
</dbReference>
<dbReference type="GO" id="GO:0005975">
    <property type="term" value="P:carbohydrate metabolic process"/>
    <property type="evidence" value="ECO:0007669"/>
    <property type="project" value="InterPro"/>
</dbReference>
<dbReference type="GO" id="GO:0051301">
    <property type="term" value="P:cell division"/>
    <property type="evidence" value="ECO:0007669"/>
    <property type="project" value="UniProtKB-KW"/>
</dbReference>
<dbReference type="GO" id="GO:0071555">
    <property type="term" value="P:cell wall organization"/>
    <property type="evidence" value="ECO:0007669"/>
    <property type="project" value="UniProtKB-KW"/>
</dbReference>
<dbReference type="GO" id="GO:0030259">
    <property type="term" value="P:lipid glycosylation"/>
    <property type="evidence" value="ECO:0007669"/>
    <property type="project" value="UniProtKB-UniRule"/>
</dbReference>
<dbReference type="GO" id="GO:0009252">
    <property type="term" value="P:peptidoglycan biosynthetic process"/>
    <property type="evidence" value="ECO:0007669"/>
    <property type="project" value="UniProtKB-UniRule"/>
</dbReference>
<dbReference type="GO" id="GO:0008360">
    <property type="term" value="P:regulation of cell shape"/>
    <property type="evidence" value="ECO:0007669"/>
    <property type="project" value="UniProtKB-KW"/>
</dbReference>
<dbReference type="CDD" id="cd03785">
    <property type="entry name" value="GT28_MurG"/>
    <property type="match status" value="1"/>
</dbReference>
<dbReference type="Gene3D" id="3.40.50.2000">
    <property type="entry name" value="Glycogen Phosphorylase B"/>
    <property type="match status" value="2"/>
</dbReference>
<dbReference type="HAMAP" id="MF_00033">
    <property type="entry name" value="MurG"/>
    <property type="match status" value="1"/>
</dbReference>
<dbReference type="InterPro" id="IPR006009">
    <property type="entry name" value="GlcNAc_MurG"/>
</dbReference>
<dbReference type="InterPro" id="IPR007235">
    <property type="entry name" value="Glyco_trans_28_C"/>
</dbReference>
<dbReference type="InterPro" id="IPR004276">
    <property type="entry name" value="GlycoTrans_28_N"/>
</dbReference>
<dbReference type="NCBIfam" id="TIGR01133">
    <property type="entry name" value="murG"/>
    <property type="match status" value="1"/>
</dbReference>
<dbReference type="PANTHER" id="PTHR21015:SF22">
    <property type="entry name" value="GLYCOSYLTRANSFERASE"/>
    <property type="match status" value="1"/>
</dbReference>
<dbReference type="PANTHER" id="PTHR21015">
    <property type="entry name" value="UDP-N-ACETYLGLUCOSAMINE--N-ACETYLMURAMYL-(PENTAPEPTIDE) PYROPHOSPHORYL-UNDECAPRENOL N-ACETYLGLUCOSAMINE TRANSFERASE 1"/>
    <property type="match status" value="1"/>
</dbReference>
<dbReference type="Pfam" id="PF04101">
    <property type="entry name" value="Glyco_tran_28_C"/>
    <property type="match status" value="1"/>
</dbReference>
<dbReference type="Pfam" id="PF03033">
    <property type="entry name" value="Glyco_transf_28"/>
    <property type="match status" value="1"/>
</dbReference>
<dbReference type="SUPFAM" id="SSF53756">
    <property type="entry name" value="UDP-Glycosyltransferase/glycogen phosphorylase"/>
    <property type="match status" value="1"/>
</dbReference>
<feature type="chain" id="PRO_1000192137" description="UDP-N-acetylglucosamine--N-acetylmuramyl-(pentapeptide) pyrophosphoryl-undecaprenol N-acetylglucosamine transferase">
    <location>
        <begin position="1"/>
        <end position="410"/>
    </location>
</feature>
<feature type="region of interest" description="Disordered" evidence="2">
    <location>
        <begin position="1"/>
        <end position="34"/>
    </location>
</feature>
<feature type="compositionally biased region" description="Low complexity" evidence="2">
    <location>
        <begin position="14"/>
        <end position="34"/>
    </location>
</feature>
<feature type="binding site" evidence="1">
    <location>
        <begin position="45"/>
        <end position="47"/>
    </location>
    <ligand>
        <name>UDP-N-acetyl-alpha-D-glucosamine</name>
        <dbReference type="ChEBI" id="CHEBI:57705"/>
    </ligand>
</feature>
<feature type="binding site" evidence="1">
    <location>
        <position position="167"/>
    </location>
    <ligand>
        <name>UDP-N-acetyl-alpha-D-glucosamine</name>
        <dbReference type="ChEBI" id="CHEBI:57705"/>
    </ligand>
</feature>
<feature type="binding site" evidence="1">
    <location>
        <position position="204"/>
    </location>
    <ligand>
        <name>UDP-N-acetyl-alpha-D-glucosamine</name>
        <dbReference type="ChEBI" id="CHEBI:57705"/>
    </ligand>
</feature>
<feature type="binding site" evidence="1">
    <location>
        <position position="238"/>
    </location>
    <ligand>
        <name>UDP-N-acetyl-alpha-D-glucosamine</name>
        <dbReference type="ChEBI" id="CHEBI:57705"/>
    </ligand>
</feature>
<feature type="binding site" evidence="1">
    <location>
        <position position="334"/>
    </location>
    <ligand>
        <name>UDP-N-acetyl-alpha-D-glucosamine</name>
        <dbReference type="ChEBI" id="CHEBI:57705"/>
    </ligand>
</feature>
<gene>
    <name evidence="1" type="primary">murG</name>
    <name type="ordered locus">JTY_2164</name>
</gene>
<accession>C1AQ69</accession>
<sequence>MKDTVSQPAGGRGATAPRPADAASPSCGSSPSADSLSVVLAGGGTAGHVEPAMAVADALVALDPRVRITALGTPRGLETRLVPQRGYHLELITAVPMPRKPGGDLARLPSRVWRAVREARDVLDDVDADVVVGFGGYVALPAYLAARGLPLPPRRRRRIPVVIHEANARAGLANRVGAHTADRVLSAVPDSGLRRAEVVGVPVRASIAALDRAVLRAEARAHFGFPDDARVLLVFGGSQGAVSLNRAVSGAAADLAAAGVCVLHAHGPQNVLELRRRAQGDPPYVAVPYLDRMELAYAAADLVICRAGAMTVAEVSAVGLPAIYVPLPIGNGEQRLNALPVVNAGGGMVVADAALTPELVARQVAGLLTDPARLAAMTAAAARVGHRDAAGQVARAALAVATGAGARTTT</sequence>
<name>MURG_MYCBT</name>
<organism>
    <name type="scientific">Mycobacterium bovis (strain BCG / Tokyo 172 / ATCC 35737 / TMC 1019)</name>
    <dbReference type="NCBI Taxonomy" id="561275"/>
    <lineage>
        <taxon>Bacteria</taxon>
        <taxon>Bacillati</taxon>
        <taxon>Actinomycetota</taxon>
        <taxon>Actinomycetes</taxon>
        <taxon>Mycobacteriales</taxon>
        <taxon>Mycobacteriaceae</taxon>
        <taxon>Mycobacterium</taxon>
        <taxon>Mycobacterium tuberculosis complex</taxon>
    </lineage>
</organism>
<protein>
    <recommendedName>
        <fullName evidence="1">UDP-N-acetylglucosamine--N-acetylmuramyl-(pentapeptide) pyrophosphoryl-undecaprenol N-acetylglucosamine transferase</fullName>
        <ecNumber evidence="1">2.4.1.227</ecNumber>
    </recommendedName>
    <alternativeName>
        <fullName evidence="1">Undecaprenyl-PP-MurNAc-pentapeptide-UDPGlcNAc GlcNAc transferase</fullName>
    </alternativeName>
</protein>
<keyword id="KW-0131">Cell cycle</keyword>
<keyword id="KW-0132">Cell division</keyword>
<keyword id="KW-1003">Cell membrane</keyword>
<keyword id="KW-0133">Cell shape</keyword>
<keyword id="KW-0961">Cell wall biogenesis/degradation</keyword>
<keyword id="KW-0328">Glycosyltransferase</keyword>
<keyword id="KW-0472">Membrane</keyword>
<keyword id="KW-0573">Peptidoglycan synthesis</keyword>
<keyword id="KW-0808">Transferase</keyword>
<comment type="function">
    <text evidence="1">Cell wall formation. Catalyzes the transfer of a GlcNAc subunit on undecaprenyl-pyrophosphoryl-MurNAc-pentapeptide (lipid intermediate I) to form undecaprenyl-pyrophosphoryl-MurNAc-(pentapeptide)GlcNAc (lipid intermediate II).</text>
</comment>
<comment type="catalytic activity">
    <reaction evidence="1">
        <text>di-trans,octa-cis-undecaprenyl diphospho-N-acetyl-alpha-D-muramoyl-L-alanyl-D-glutamyl-meso-2,6-diaminopimeloyl-D-alanyl-D-alanine + UDP-N-acetyl-alpha-D-glucosamine = di-trans,octa-cis-undecaprenyl diphospho-[N-acetyl-alpha-D-glucosaminyl-(1-&gt;4)]-N-acetyl-alpha-D-muramoyl-L-alanyl-D-glutamyl-meso-2,6-diaminopimeloyl-D-alanyl-D-alanine + UDP + H(+)</text>
        <dbReference type="Rhea" id="RHEA:31227"/>
        <dbReference type="ChEBI" id="CHEBI:15378"/>
        <dbReference type="ChEBI" id="CHEBI:57705"/>
        <dbReference type="ChEBI" id="CHEBI:58223"/>
        <dbReference type="ChEBI" id="CHEBI:61387"/>
        <dbReference type="ChEBI" id="CHEBI:61388"/>
        <dbReference type="EC" id="2.4.1.227"/>
    </reaction>
</comment>
<comment type="pathway">
    <text evidence="1">Cell wall biogenesis; peptidoglycan biosynthesis.</text>
</comment>
<comment type="subcellular location">
    <subcellularLocation>
        <location evidence="1">Cell membrane</location>
        <topology evidence="1">Peripheral membrane protein</topology>
        <orientation evidence="1">Cytoplasmic side</orientation>
    </subcellularLocation>
</comment>
<comment type="similarity">
    <text evidence="1">Belongs to the glycosyltransferase 28 family. MurG subfamily.</text>
</comment>
<evidence type="ECO:0000255" key="1">
    <source>
        <dbReference type="HAMAP-Rule" id="MF_00033"/>
    </source>
</evidence>
<evidence type="ECO:0000256" key="2">
    <source>
        <dbReference type="SAM" id="MobiDB-lite"/>
    </source>
</evidence>
<reference key="1">
    <citation type="journal article" date="2009" name="Vaccine">
        <title>Whole genome sequence analysis of Mycobacterium bovis bacillus Calmette-Guerin (BCG) Tokyo 172: a comparative study of BCG vaccine substrains.</title>
        <authorList>
            <person name="Seki M."/>
            <person name="Honda I."/>
            <person name="Fujita I."/>
            <person name="Yano I."/>
            <person name="Yamamoto S."/>
            <person name="Koyama A."/>
        </authorList>
    </citation>
    <scope>NUCLEOTIDE SEQUENCE [LARGE SCALE GENOMIC DNA]</scope>
    <source>
        <strain>BCG / Tokyo 172 / ATCC 35737 / TMC 1019</strain>
    </source>
</reference>